<organism>
    <name type="scientific">Influenza B virus (strain B/Ann Arbor/1/1966 [wild-type])</name>
    <dbReference type="NCBI Taxonomy" id="11523"/>
    <lineage>
        <taxon>Viruses</taxon>
        <taxon>Riboviria</taxon>
        <taxon>Orthornavirae</taxon>
        <taxon>Negarnaviricota</taxon>
        <taxon>Polyploviricotina</taxon>
        <taxon>Insthoviricetes</taxon>
        <taxon>Articulavirales</taxon>
        <taxon>Orthomyxoviridae</taxon>
        <taxon>Betainfluenzavirus</taxon>
        <taxon>Betainfluenzavirus influenzae</taxon>
        <taxon>Influenza B virus</taxon>
    </lineage>
</organism>
<organismHost>
    <name type="scientific">Homo sapiens</name>
    <name type="common">Human</name>
    <dbReference type="NCBI Taxonomy" id="9606"/>
</organismHost>
<sequence length="752" mass="84322">MNINPYFLFIDVPIQAAISTTFPYTGVPPYSHGTGTGYTIDTVIRTHEYSNKGKQYISDVTGCAMVDPTNGPLPEDNEPSAYAQLDCVLEALDRMDEEHPGLFQAASQNAMEALMVTTVDKLTQGRQTFDWTVCRNQPAATALNTTITSFRLNDLNGADKGGLVPFCQDIIDSLDKPEMTFFSVKNIKKKLPAKNRKGFLIKRIPMKVKDRITRVEYIKRALSLNTMTKDAERGKLKRRAIATAGIQIRGFVLVVENLAKNICENLEQSGLPVGGNEKKAKLSNAVAKMLSNCPPGGISMTVTGDNTKWNECLNPRIFLAMTERITRDSPIWFRDFCSIAPVLFSNKIARLGKGFMITSKTKRLKAQIPCPDLFNIPLERYNEETRAKLKKLKPFFNEEGTASLSPGMMMGMFNMLSTVLGVAALGIKNIGNREYLWDGLQSSDDFALFVNAKDEETCMEGINDFYRTCKLLGINMSKKKSYCNETGMFEFTSMFYRDGFVSNFAMELPSFGVAGVNESADMAIGMTIIKNNMINNGMGPATAQTAIQLFIADYRYTYKCHRGDSKVEGKRMKIIKELWENTKGRDGLLVADGGPNIYNLRNLHIPEIVLKYNLMDPEYKGRLLHPQNPFVGHLSIEGIKEADITPAHGPIKKMDYDAVSGTHSWRTKRNRSILNTDQRNMILEEQCYAKCCNLFEACFNSASYRKPVGQHSMLEAMAHRLRMDARLDYESGRMSKDDFEKAMAHLGEIGHI</sequence>
<accession>P13872</accession>
<accession>Q84079</accession>
<protein>
    <recommendedName>
        <fullName evidence="1">RNA-directed RNA polymerase catalytic subunit</fullName>
        <ecNumber evidence="1">2.7.7.48</ecNumber>
    </recommendedName>
    <alternativeName>
        <fullName evidence="1">Polymerase basic protein 1</fullName>
        <shortName evidence="1">PB1</shortName>
    </alternativeName>
    <alternativeName>
        <fullName evidence="1">RNA-directed RNA polymerase subunit P1</fullName>
    </alternativeName>
</protein>
<comment type="function">
    <text evidence="1">RNA-dependent RNA polymerase which is responsible for replication and transcription of virus RNA segments. The transcription of viral mRNAs occurs by a unique mechanism called cap-snatching. 5' methylated caps of cellular mRNAs are cleaved after 10-13 nucleotides by PA. In turn, these short capped RNAs are used as primers by PB1 for transcription of viral mRNAs. During virus replication, PB1 initiates RNA synthesis and copy vRNA into complementary RNA (cRNA) which in turn serves as a template for the production of more vRNAs.</text>
</comment>
<comment type="catalytic activity">
    <reaction evidence="1">
        <text>RNA(n) + a ribonucleoside 5'-triphosphate = RNA(n+1) + diphosphate</text>
        <dbReference type="Rhea" id="RHEA:21248"/>
        <dbReference type="Rhea" id="RHEA-COMP:14527"/>
        <dbReference type="Rhea" id="RHEA-COMP:17342"/>
        <dbReference type="ChEBI" id="CHEBI:33019"/>
        <dbReference type="ChEBI" id="CHEBI:61557"/>
        <dbReference type="ChEBI" id="CHEBI:140395"/>
        <dbReference type="EC" id="2.7.7.48"/>
    </reaction>
</comment>
<comment type="subunit">
    <text evidence="1">Influenza RNA polymerase is composed of three subunits: PB1, PB2 and PA. Interacts (via N-terminus) with PA (via C-terminus). Interacts (via C-terminus) with PB2 (via N-terminus); this interaction is essential for transcription initiation.</text>
</comment>
<comment type="subcellular location">
    <subcellularLocation>
        <location evidence="1">Host nucleus</location>
    </subcellularLocation>
    <subcellularLocation>
        <location evidence="1">Host cytoplasm</location>
    </subcellularLocation>
</comment>
<comment type="PTM">
    <text evidence="1">Phosphorylated by host PRKCA.</text>
</comment>
<comment type="similarity">
    <text evidence="1">Belongs to the influenza viruses polymerase PB1 family.</text>
</comment>
<evidence type="ECO:0000255" key="1">
    <source>
        <dbReference type="HAMAP-Rule" id="MF_04065"/>
    </source>
</evidence>
<dbReference type="EC" id="2.7.7.48" evidence="1"/>
<dbReference type="EMBL" id="M20170">
    <property type="protein sequence ID" value="AAA43770.1"/>
    <property type="molecule type" value="Genomic_RNA"/>
</dbReference>
<dbReference type="EMBL" id="M20479">
    <property type="protein sequence ID" value="AAA43768.1"/>
    <property type="molecule type" value="Genomic_RNA"/>
</dbReference>
<dbReference type="PIR" id="D28604">
    <property type="entry name" value="P1IVBW"/>
</dbReference>
<dbReference type="SMR" id="P13872"/>
<dbReference type="GO" id="GO:0030430">
    <property type="term" value="C:host cell cytoplasm"/>
    <property type="evidence" value="ECO:0007669"/>
    <property type="project" value="UniProtKB-SubCell"/>
</dbReference>
<dbReference type="GO" id="GO:0042025">
    <property type="term" value="C:host cell nucleus"/>
    <property type="evidence" value="ECO:0007669"/>
    <property type="project" value="UniProtKB-SubCell"/>
</dbReference>
<dbReference type="GO" id="GO:0000166">
    <property type="term" value="F:nucleotide binding"/>
    <property type="evidence" value="ECO:0007669"/>
    <property type="project" value="UniProtKB-UniRule"/>
</dbReference>
<dbReference type="GO" id="GO:0003723">
    <property type="term" value="F:RNA binding"/>
    <property type="evidence" value="ECO:0007669"/>
    <property type="project" value="InterPro"/>
</dbReference>
<dbReference type="GO" id="GO:0003968">
    <property type="term" value="F:RNA-directed RNA polymerase activity"/>
    <property type="evidence" value="ECO:0007669"/>
    <property type="project" value="UniProtKB-UniRule"/>
</dbReference>
<dbReference type="GO" id="GO:0006351">
    <property type="term" value="P:DNA-templated transcription"/>
    <property type="evidence" value="ECO:0007669"/>
    <property type="project" value="UniProtKB-UniRule"/>
</dbReference>
<dbReference type="GO" id="GO:0039657">
    <property type="term" value="P:symbiont-mediated suppression of host gene expression"/>
    <property type="evidence" value="ECO:0007669"/>
    <property type="project" value="UniProtKB-KW"/>
</dbReference>
<dbReference type="GO" id="GO:0039523">
    <property type="term" value="P:symbiont-mediated suppression of host mRNA transcription via inhibition of RNA polymerase II activity"/>
    <property type="evidence" value="ECO:0007669"/>
    <property type="project" value="UniProtKB-UniRule"/>
</dbReference>
<dbReference type="GO" id="GO:0039694">
    <property type="term" value="P:viral RNA genome replication"/>
    <property type="evidence" value="ECO:0007669"/>
    <property type="project" value="UniProtKB-UniRule"/>
</dbReference>
<dbReference type="GO" id="GO:0019083">
    <property type="term" value="P:viral transcription"/>
    <property type="evidence" value="ECO:0007669"/>
    <property type="project" value="UniProtKB-KW"/>
</dbReference>
<dbReference type="Gene3D" id="6.10.140.720">
    <property type="match status" value="1"/>
</dbReference>
<dbReference type="HAMAP" id="MF_04065">
    <property type="entry name" value="INFV_RDRP"/>
    <property type="match status" value="1"/>
</dbReference>
<dbReference type="InterPro" id="IPR007099">
    <property type="entry name" value="RNA-dir_pol_NSvirus"/>
</dbReference>
<dbReference type="InterPro" id="IPR001407">
    <property type="entry name" value="RNA_pol_PB1_influenza"/>
</dbReference>
<dbReference type="Pfam" id="PF00602">
    <property type="entry name" value="Flu_PB1"/>
    <property type="match status" value="1"/>
</dbReference>
<dbReference type="PIRSF" id="PIRSF000827">
    <property type="entry name" value="RdRPol_OMV"/>
    <property type="match status" value="1"/>
</dbReference>
<dbReference type="PROSITE" id="PS50525">
    <property type="entry name" value="RDRP_SSRNA_NEG_SEG"/>
    <property type="match status" value="1"/>
</dbReference>
<name>RDRP_INBAD</name>
<keyword id="KW-1262">Eukaryotic host gene expression shutoff by virus</keyword>
<keyword id="KW-1191">Eukaryotic host transcription shutoff by virus</keyword>
<keyword id="KW-1035">Host cytoplasm</keyword>
<keyword id="KW-1190">Host gene expression shutoff by virus</keyword>
<keyword id="KW-1048">Host nucleus</keyword>
<keyword id="KW-0945">Host-virus interaction</keyword>
<keyword id="KW-1104">Inhibition of host RNA polymerase II by virus</keyword>
<keyword id="KW-0547">Nucleotide-binding</keyword>
<keyword id="KW-0548">Nucleotidyltransferase</keyword>
<keyword id="KW-0597">Phosphoprotein</keyword>
<keyword id="KW-0696">RNA-directed RNA polymerase</keyword>
<keyword id="KW-0808">Transferase</keyword>
<keyword id="KW-0693">Viral RNA replication</keyword>
<keyword id="KW-1195">Viral transcription</keyword>
<feature type="chain" id="PRO_0000078773" description="RNA-directed RNA polymerase catalytic subunit">
    <location>
        <begin position="1"/>
        <end position="752"/>
    </location>
</feature>
<feature type="domain" description="RdRp catalytic" evidence="1">
    <location>
        <begin position="286"/>
        <end position="482"/>
    </location>
</feature>
<feature type="region of interest" description="Promoter-binding site" evidence="1">
    <location>
        <begin position="249"/>
        <end position="256"/>
    </location>
</feature>
<feature type="short sequence motif" description="Nuclear localization signal" evidence="1">
    <location>
        <begin position="187"/>
        <end position="195"/>
    </location>
</feature>
<feature type="short sequence motif" description="Nuclear localization signal" evidence="1">
    <location>
        <begin position="203"/>
        <end position="216"/>
    </location>
</feature>
<feature type="sequence conflict" description="In Ref. 2; AAA43768." ref="2">
    <original>R</original>
    <variation>E</variation>
    <location>
        <position position="239"/>
    </location>
</feature>
<gene>
    <name evidence="1" type="primary">PB1</name>
</gene>
<reference key="1">
    <citation type="journal article" date="1988" name="Virology">
        <title>Sequence comparison of wild-type and cold-adapted B/Ann Arbor/1/66 influenza virus genes.</title>
        <authorList>
            <person name="Deborde D.C."/>
            <person name="Donabedian A.M."/>
            <person name="Herlocher M.L."/>
            <person name="Naeve C.W."/>
            <person name="Maassab H.F."/>
        </authorList>
    </citation>
    <scope>NUCLEOTIDE SEQUENCE [GENOMIC RNA]</scope>
</reference>
<reference key="2">
    <citation type="journal article" date="1987" name="Virus Res.">
        <title>Nucleotide sequences of the PA and PB1 genes of B/Ann Arbor/1/66 virus: comparison with genes of B/Lee/40 and type A influenza viruses.</title>
        <authorList>
            <person name="Deborde D.C."/>
            <person name="Herlocher M.L."/>
            <person name="Maassab H.F."/>
        </authorList>
    </citation>
    <scope>NUCLEOTIDE SEQUENCE [GENOMIC RNA]</scope>
</reference>
<proteinExistence type="inferred from homology"/>